<accession>B9DJG9</accession>
<gene>
    <name evidence="1" type="primary">aroD</name>
    <name type="ordered locus">Sca_0448</name>
</gene>
<proteinExistence type="inferred from homology"/>
<protein>
    <recommendedName>
        <fullName evidence="1">3-dehydroquinate dehydratase</fullName>
        <shortName evidence="1">3-dehydroquinase</shortName>
        <ecNumber evidence="1">4.2.1.10</ecNumber>
    </recommendedName>
    <alternativeName>
        <fullName evidence="1">Type I DHQase</fullName>
    </alternativeName>
    <alternativeName>
        <fullName evidence="1">Type I dehydroquinase</fullName>
        <shortName evidence="1">DHQ1</shortName>
    </alternativeName>
</protein>
<dbReference type="EC" id="4.2.1.10" evidence="1"/>
<dbReference type="EMBL" id="AM295250">
    <property type="protein sequence ID" value="CAL27362.1"/>
    <property type="molecule type" value="Genomic_DNA"/>
</dbReference>
<dbReference type="RefSeq" id="WP_015899706.1">
    <property type="nucleotide sequence ID" value="NC_012121.1"/>
</dbReference>
<dbReference type="SMR" id="B9DJG9"/>
<dbReference type="GeneID" id="93795380"/>
<dbReference type="KEGG" id="sca:SCA_0448"/>
<dbReference type="eggNOG" id="COG0710">
    <property type="taxonomic scope" value="Bacteria"/>
</dbReference>
<dbReference type="HOGENOM" id="CLU_064444_0_0_9"/>
<dbReference type="OrthoDB" id="9813659at2"/>
<dbReference type="BioCyc" id="SCAR396513:SCA_RS02280-MONOMER"/>
<dbReference type="UniPathway" id="UPA00053">
    <property type="reaction ID" value="UER00086"/>
</dbReference>
<dbReference type="Proteomes" id="UP000000444">
    <property type="component" value="Chromosome"/>
</dbReference>
<dbReference type="GO" id="GO:0003855">
    <property type="term" value="F:3-dehydroquinate dehydratase activity"/>
    <property type="evidence" value="ECO:0007669"/>
    <property type="project" value="UniProtKB-UniRule"/>
</dbReference>
<dbReference type="GO" id="GO:0046279">
    <property type="term" value="P:3,4-dihydroxybenzoate biosynthetic process"/>
    <property type="evidence" value="ECO:0007669"/>
    <property type="project" value="TreeGrafter"/>
</dbReference>
<dbReference type="GO" id="GO:0008652">
    <property type="term" value="P:amino acid biosynthetic process"/>
    <property type="evidence" value="ECO:0007669"/>
    <property type="project" value="UniProtKB-KW"/>
</dbReference>
<dbReference type="GO" id="GO:0009073">
    <property type="term" value="P:aromatic amino acid family biosynthetic process"/>
    <property type="evidence" value="ECO:0007669"/>
    <property type="project" value="UniProtKB-KW"/>
</dbReference>
<dbReference type="GO" id="GO:0009423">
    <property type="term" value="P:chorismate biosynthetic process"/>
    <property type="evidence" value="ECO:0007669"/>
    <property type="project" value="UniProtKB-UniRule"/>
</dbReference>
<dbReference type="CDD" id="cd00502">
    <property type="entry name" value="DHQase_I"/>
    <property type="match status" value="1"/>
</dbReference>
<dbReference type="FunFam" id="3.20.20.70:FF:000047">
    <property type="entry name" value="3-dehydroquinate dehydratase"/>
    <property type="match status" value="1"/>
</dbReference>
<dbReference type="Gene3D" id="3.20.20.70">
    <property type="entry name" value="Aldolase class I"/>
    <property type="match status" value="1"/>
</dbReference>
<dbReference type="HAMAP" id="MF_00214">
    <property type="entry name" value="AroD"/>
    <property type="match status" value="1"/>
</dbReference>
<dbReference type="InterPro" id="IPR013785">
    <property type="entry name" value="Aldolase_TIM"/>
</dbReference>
<dbReference type="InterPro" id="IPR001381">
    <property type="entry name" value="DHquinase_I"/>
</dbReference>
<dbReference type="InterPro" id="IPR050146">
    <property type="entry name" value="Type-I_3-dehydroquinase"/>
</dbReference>
<dbReference type="NCBIfam" id="TIGR01093">
    <property type="entry name" value="aroD"/>
    <property type="match status" value="1"/>
</dbReference>
<dbReference type="PANTHER" id="PTHR43699">
    <property type="entry name" value="3-DEHYDROQUINATE DEHYDRATASE"/>
    <property type="match status" value="1"/>
</dbReference>
<dbReference type="PANTHER" id="PTHR43699:SF1">
    <property type="entry name" value="3-DEHYDROQUINATE DEHYDRATASE"/>
    <property type="match status" value="1"/>
</dbReference>
<dbReference type="Pfam" id="PF01487">
    <property type="entry name" value="DHquinase_I"/>
    <property type="match status" value="1"/>
</dbReference>
<dbReference type="SUPFAM" id="SSF51569">
    <property type="entry name" value="Aldolase"/>
    <property type="match status" value="1"/>
</dbReference>
<reference key="1">
    <citation type="journal article" date="2009" name="Appl. Environ. Microbiol.">
        <title>Genome analysis of the meat starter culture bacterium Staphylococcus carnosus TM300.</title>
        <authorList>
            <person name="Rosenstein R."/>
            <person name="Nerz C."/>
            <person name="Biswas L."/>
            <person name="Resch A."/>
            <person name="Raddatz G."/>
            <person name="Schuster S.C."/>
            <person name="Goetz F."/>
        </authorList>
    </citation>
    <scope>NUCLEOTIDE SEQUENCE [LARGE SCALE GENOMIC DNA]</scope>
    <source>
        <strain>TM300</strain>
    </source>
</reference>
<organism>
    <name type="scientific">Staphylococcus carnosus (strain TM300)</name>
    <dbReference type="NCBI Taxonomy" id="396513"/>
    <lineage>
        <taxon>Bacteria</taxon>
        <taxon>Bacillati</taxon>
        <taxon>Bacillota</taxon>
        <taxon>Bacilli</taxon>
        <taxon>Bacillales</taxon>
        <taxon>Staphylococcaceae</taxon>
        <taxon>Staphylococcus</taxon>
    </lineage>
</organism>
<name>AROD_STACT</name>
<comment type="function">
    <text evidence="1">Involved in the third step of the chorismate pathway, which leads to the biosynthesis of aromatic amino acids. Catalyzes the cis-dehydration of 3-dehydroquinate (DHQ) and introduces the first double bond of the aromatic ring to yield 3-dehydroshikimate.</text>
</comment>
<comment type="catalytic activity">
    <reaction evidence="1">
        <text>3-dehydroquinate = 3-dehydroshikimate + H2O</text>
        <dbReference type="Rhea" id="RHEA:21096"/>
        <dbReference type="ChEBI" id="CHEBI:15377"/>
        <dbReference type="ChEBI" id="CHEBI:16630"/>
        <dbReference type="ChEBI" id="CHEBI:32364"/>
        <dbReference type="EC" id="4.2.1.10"/>
    </reaction>
</comment>
<comment type="pathway">
    <text evidence="1">Metabolic intermediate biosynthesis; chorismate biosynthesis; chorismate from D-erythrose 4-phosphate and phosphoenolpyruvate: step 3/7.</text>
</comment>
<comment type="subunit">
    <text evidence="1">Homodimer.</text>
</comment>
<comment type="similarity">
    <text evidence="1">Belongs to the type-I 3-dehydroquinase family.</text>
</comment>
<keyword id="KW-0028">Amino-acid biosynthesis</keyword>
<keyword id="KW-0057">Aromatic amino acid biosynthesis</keyword>
<keyword id="KW-0456">Lyase</keyword>
<keyword id="KW-1185">Reference proteome</keyword>
<keyword id="KW-0704">Schiff base</keyword>
<feature type="chain" id="PRO_1000124785" description="3-dehydroquinate dehydratase">
    <location>
        <begin position="1"/>
        <end position="241"/>
    </location>
</feature>
<feature type="active site" description="Proton donor/acceptor" evidence="1">
    <location>
        <position position="132"/>
    </location>
</feature>
<feature type="active site" description="Schiff-base intermediate with substrate" evidence="1">
    <location>
        <position position="159"/>
    </location>
</feature>
<feature type="binding site" evidence="1">
    <location>
        <begin position="35"/>
        <end position="37"/>
    </location>
    <ligand>
        <name>3-dehydroquinate</name>
        <dbReference type="ChEBI" id="CHEBI:32364"/>
    </ligand>
</feature>
<feature type="binding site" evidence="1">
    <location>
        <position position="70"/>
    </location>
    <ligand>
        <name>3-dehydroquinate</name>
        <dbReference type="ChEBI" id="CHEBI:32364"/>
    </ligand>
</feature>
<feature type="binding site" evidence="1">
    <location>
        <position position="201"/>
    </location>
    <ligand>
        <name>3-dehydroquinate</name>
        <dbReference type="ChEBI" id="CHEBI:32364"/>
    </ligand>
</feature>
<feature type="binding site" evidence="1">
    <location>
        <position position="224"/>
    </location>
    <ligand>
        <name>3-dehydroquinate</name>
        <dbReference type="ChEBI" id="CHEBI:32364"/>
    </ligand>
</feature>
<evidence type="ECO:0000255" key="1">
    <source>
        <dbReference type="HAMAP-Rule" id="MF_00214"/>
    </source>
</evidence>
<sequence>MSKVDVAVTIAPKEEITDQLKKDLIREQKSIDIIELRIDQRESFEIADLERLFKTLKDLQLDVQVLVTYRTSVQGGKGQKNGNTYYEFLQDLIQIQGYDMVDIEWDEAQTEILLQLIVQAQSAGLKVVLSQHDFDKTPNLEVLKFLYFKMNKLGADIVKLAVMPNEKQDVLNLLEALATASESIEAKPVGISMSHLGLISRTAQGVFGGIISYGCLGTPQAPGQIHVGQLKELLNIYEINK</sequence>